<proteinExistence type="inferred from homology"/>
<accession>Q8TJT2</accession>
<sequence>MDIKILKDKNNSLLNRRELDFVVKYEGSTPSRSDVRNKLAAMLNAPLELLIIQRIKTEYGMQESKGYAKVYADEARMKQVEQEYILKRNPAPGAEAEEEEA</sequence>
<reference key="1">
    <citation type="journal article" date="2002" name="Genome Res.">
        <title>The genome of Methanosarcina acetivorans reveals extensive metabolic and physiological diversity.</title>
        <authorList>
            <person name="Galagan J.E."/>
            <person name="Nusbaum C."/>
            <person name="Roy A."/>
            <person name="Endrizzi M.G."/>
            <person name="Macdonald P."/>
            <person name="FitzHugh W."/>
            <person name="Calvo S."/>
            <person name="Engels R."/>
            <person name="Smirnov S."/>
            <person name="Atnoor D."/>
            <person name="Brown A."/>
            <person name="Allen N."/>
            <person name="Naylor J."/>
            <person name="Stange-Thomann N."/>
            <person name="DeArellano K."/>
            <person name="Johnson R."/>
            <person name="Linton L."/>
            <person name="McEwan P."/>
            <person name="McKernan K."/>
            <person name="Talamas J."/>
            <person name="Tirrell A."/>
            <person name="Ye W."/>
            <person name="Zimmer A."/>
            <person name="Barber R.D."/>
            <person name="Cann I."/>
            <person name="Graham D.E."/>
            <person name="Grahame D.A."/>
            <person name="Guss A.M."/>
            <person name="Hedderich R."/>
            <person name="Ingram-Smith C."/>
            <person name="Kuettner H.C."/>
            <person name="Krzycki J.A."/>
            <person name="Leigh J.A."/>
            <person name="Li W."/>
            <person name="Liu J."/>
            <person name="Mukhopadhyay B."/>
            <person name="Reeve J.N."/>
            <person name="Smith K."/>
            <person name="Springer T.A."/>
            <person name="Umayam L.A."/>
            <person name="White O."/>
            <person name="White R.H."/>
            <person name="de Macario E.C."/>
            <person name="Ferry J.G."/>
            <person name="Jarrell K.F."/>
            <person name="Jing H."/>
            <person name="Macario A.J.L."/>
            <person name="Paulsen I.T."/>
            <person name="Pritchett M."/>
            <person name="Sowers K.R."/>
            <person name="Swanson R.V."/>
            <person name="Zinder S.H."/>
            <person name="Lander E."/>
            <person name="Metcalf W.W."/>
            <person name="Birren B."/>
        </authorList>
    </citation>
    <scope>NUCLEOTIDE SEQUENCE [LARGE SCALE GENOMIC DNA]</scope>
    <source>
        <strain>ATCC 35395 / DSM 2834 / JCM 12185 / C2A</strain>
    </source>
</reference>
<organism>
    <name type="scientific">Methanosarcina acetivorans (strain ATCC 35395 / DSM 2834 / JCM 12185 / C2A)</name>
    <dbReference type="NCBI Taxonomy" id="188937"/>
    <lineage>
        <taxon>Archaea</taxon>
        <taxon>Methanobacteriati</taxon>
        <taxon>Methanobacteriota</taxon>
        <taxon>Stenosarchaea group</taxon>
        <taxon>Methanomicrobia</taxon>
        <taxon>Methanosarcinales</taxon>
        <taxon>Methanosarcinaceae</taxon>
        <taxon>Methanosarcina</taxon>
    </lineage>
</organism>
<comment type="similarity">
    <text evidence="1">Belongs to the eukaryotic ribosomal protein eS24 family.</text>
</comment>
<protein>
    <recommendedName>
        <fullName evidence="1">Small ribosomal subunit protein eS24</fullName>
    </recommendedName>
    <alternativeName>
        <fullName evidence="2">30S ribosomal protein S24e</fullName>
    </alternativeName>
</protein>
<evidence type="ECO:0000255" key="1">
    <source>
        <dbReference type="HAMAP-Rule" id="MF_00545"/>
    </source>
</evidence>
<evidence type="ECO:0000305" key="2"/>
<keyword id="KW-1185">Reference proteome</keyword>
<keyword id="KW-0687">Ribonucleoprotein</keyword>
<keyword id="KW-0689">Ribosomal protein</keyword>
<name>RS24_METAC</name>
<gene>
    <name evidence="1" type="primary">rps24e</name>
    <name type="ordered locus">MA_3695</name>
</gene>
<dbReference type="EMBL" id="AE010299">
    <property type="protein sequence ID" value="AAM07050.1"/>
    <property type="molecule type" value="Genomic_DNA"/>
</dbReference>
<dbReference type="RefSeq" id="WP_011023602.1">
    <property type="nucleotide sequence ID" value="NC_003552.1"/>
</dbReference>
<dbReference type="SMR" id="Q8TJT2"/>
<dbReference type="FunCoup" id="Q8TJT2">
    <property type="interactions" value="56"/>
</dbReference>
<dbReference type="STRING" id="188937.MA_3695"/>
<dbReference type="EnsemblBacteria" id="AAM07050">
    <property type="protein sequence ID" value="AAM07050"/>
    <property type="gene ID" value="MA_3695"/>
</dbReference>
<dbReference type="GeneID" id="1475588"/>
<dbReference type="KEGG" id="mac:MA_3695"/>
<dbReference type="HOGENOM" id="CLU_107248_3_1_2"/>
<dbReference type="InParanoid" id="Q8TJT2"/>
<dbReference type="OrthoDB" id="27533at2157"/>
<dbReference type="PhylomeDB" id="Q8TJT2"/>
<dbReference type="Proteomes" id="UP000002487">
    <property type="component" value="Chromosome"/>
</dbReference>
<dbReference type="GO" id="GO:1990904">
    <property type="term" value="C:ribonucleoprotein complex"/>
    <property type="evidence" value="ECO:0007669"/>
    <property type="project" value="UniProtKB-KW"/>
</dbReference>
<dbReference type="GO" id="GO:0005840">
    <property type="term" value="C:ribosome"/>
    <property type="evidence" value="ECO:0007669"/>
    <property type="project" value="UniProtKB-KW"/>
</dbReference>
<dbReference type="GO" id="GO:0003735">
    <property type="term" value="F:structural constituent of ribosome"/>
    <property type="evidence" value="ECO:0007669"/>
    <property type="project" value="InterPro"/>
</dbReference>
<dbReference type="GO" id="GO:0006412">
    <property type="term" value="P:translation"/>
    <property type="evidence" value="ECO:0007669"/>
    <property type="project" value="UniProtKB-UniRule"/>
</dbReference>
<dbReference type="Gene3D" id="3.30.70.330">
    <property type="match status" value="1"/>
</dbReference>
<dbReference type="HAMAP" id="MF_00545">
    <property type="entry name" value="Ribosomal_eS24"/>
    <property type="match status" value="1"/>
</dbReference>
<dbReference type="InterPro" id="IPR012677">
    <property type="entry name" value="Nucleotide-bd_a/b_plait_sf"/>
</dbReference>
<dbReference type="InterPro" id="IPR001976">
    <property type="entry name" value="Ribosomal_eS24"/>
</dbReference>
<dbReference type="InterPro" id="IPR018098">
    <property type="entry name" value="Ribosomal_eS24_CS"/>
</dbReference>
<dbReference type="InterPro" id="IPR012678">
    <property type="entry name" value="Ribosomal_uL23/eL15/eS24_sf"/>
</dbReference>
<dbReference type="PANTHER" id="PTHR10496">
    <property type="entry name" value="40S RIBOSOMAL PROTEIN S24"/>
    <property type="match status" value="1"/>
</dbReference>
<dbReference type="Pfam" id="PF01282">
    <property type="entry name" value="Ribosomal_S24e"/>
    <property type="match status" value="1"/>
</dbReference>
<dbReference type="SUPFAM" id="SSF54189">
    <property type="entry name" value="Ribosomal proteins S24e, L23 and L15e"/>
    <property type="match status" value="1"/>
</dbReference>
<dbReference type="PROSITE" id="PS00529">
    <property type="entry name" value="RIBOSOMAL_S24E"/>
    <property type="match status" value="1"/>
</dbReference>
<feature type="chain" id="PRO_0000137642" description="Small ribosomal subunit protein eS24">
    <location>
        <begin position="1"/>
        <end position="101"/>
    </location>
</feature>